<gene>
    <name type="ordered locus">CTL0603</name>
</gene>
<proteinExistence type="inferred from homology"/>
<sequence>MEARLVLGSSSERRKAVLESFRIPFICVSPDFDERSIVYSGDPFKYTKELAWNKANVVRSQGFSDALIITADTVVVYKGEVFNKPESEEHAVEMLRTLSGSSHSVITTLVLMQNEKVLSASENTQVSFIDIPPQHLKTYVRSFSSLKRCGGYCVQDGGGLIIKQIEGCVYNIQGLPIKTLNQLLMEFNISLWDYLV</sequence>
<feature type="chain" id="PRO_1000127775" description="dTTP/UTP pyrophosphatase">
    <location>
        <begin position="1"/>
        <end position="196"/>
    </location>
</feature>
<feature type="active site" description="Proton acceptor" evidence="1">
    <location>
        <position position="72"/>
    </location>
</feature>
<feature type="site" description="Important for substrate specificity" evidence="1">
    <location>
        <position position="13"/>
    </location>
</feature>
<feature type="site" description="Important for substrate specificity" evidence="1">
    <location>
        <position position="73"/>
    </location>
</feature>
<feature type="site" description="Important for substrate specificity" evidence="1">
    <location>
        <position position="155"/>
    </location>
</feature>
<keyword id="KW-0963">Cytoplasm</keyword>
<keyword id="KW-0378">Hydrolase</keyword>
<keyword id="KW-0546">Nucleotide metabolism</keyword>
<dbReference type="EC" id="3.6.1.9" evidence="1"/>
<dbReference type="EMBL" id="AM884176">
    <property type="protein sequence ID" value="CAP04044.1"/>
    <property type="molecule type" value="Genomic_DNA"/>
</dbReference>
<dbReference type="RefSeq" id="WP_009873746.1">
    <property type="nucleotide sequence ID" value="NC_010287.1"/>
</dbReference>
<dbReference type="RefSeq" id="YP_001654679.1">
    <property type="nucleotide sequence ID" value="NC_010287.1"/>
</dbReference>
<dbReference type="SMR" id="B0B7R8"/>
<dbReference type="KEGG" id="ctb:CTL0603"/>
<dbReference type="PATRIC" id="fig|471472.4.peg.651"/>
<dbReference type="HOGENOM" id="CLU_040416_0_0_0"/>
<dbReference type="Proteomes" id="UP001154402">
    <property type="component" value="Chromosome"/>
</dbReference>
<dbReference type="GO" id="GO:0005737">
    <property type="term" value="C:cytoplasm"/>
    <property type="evidence" value="ECO:0007669"/>
    <property type="project" value="UniProtKB-SubCell"/>
</dbReference>
<dbReference type="GO" id="GO:0036218">
    <property type="term" value="F:dTTP diphosphatase activity"/>
    <property type="evidence" value="ECO:0007669"/>
    <property type="project" value="RHEA"/>
</dbReference>
<dbReference type="GO" id="GO:0036221">
    <property type="term" value="F:UTP diphosphatase activity"/>
    <property type="evidence" value="ECO:0007669"/>
    <property type="project" value="RHEA"/>
</dbReference>
<dbReference type="GO" id="GO:0009117">
    <property type="term" value="P:nucleotide metabolic process"/>
    <property type="evidence" value="ECO:0007669"/>
    <property type="project" value="UniProtKB-KW"/>
</dbReference>
<dbReference type="CDD" id="cd00555">
    <property type="entry name" value="Maf"/>
    <property type="match status" value="1"/>
</dbReference>
<dbReference type="FunFam" id="3.90.950.10:FF:000018">
    <property type="entry name" value="dTTP/UTP pyrophosphatase"/>
    <property type="match status" value="1"/>
</dbReference>
<dbReference type="Gene3D" id="3.90.950.10">
    <property type="match status" value="1"/>
</dbReference>
<dbReference type="HAMAP" id="MF_00528">
    <property type="entry name" value="Maf"/>
    <property type="match status" value="1"/>
</dbReference>
<dbReference type="InterPro" id="IPR029001">
    <property type="entry name" value="ITPase-like_fam"/>
</dbReference>
<dbReference type="InterPro" id="IPR003697">
    <property type="entry name" value="Maf-like"/>
</dbReference>
<dbReference type="NCBIfam" id="TIGR00172">
    <property type="entry name" value="maf"/>
    <property type="match status" value="1"/>
</dbReference>
<dbReference type="PANTHER" id="PTHR43213">
    <property type="entry name" value="BIFUNCTIONAL DTTP/UTP PYROPHOSPHATASE/METHYLTRANSFERASE PROTEIN-RELATED"/>
    <property type="match status" value="1"/>
</dbReference>
<dbReference type="PANTHER" id="PTHR43213:SF5">
    <property type="entry name" value="BIFUNCTIONAL DTTP_UTP PYROPHOSPHATASE_METHYLTRANSFERASE PROTEIN-RELATED"/>
    <property type="match status" value="1"/>
</dbReference>
<dbReference type="Pfam" id="PF02545">
    <property type="entry name" value="Maf"/>
    <property type="match status" value="1"/>
</dbReference>
<dbReference type="PIRSF" id="PIRSF006305">
    <property type="entry name" value="Maf"/>
    <property type="match status" value="1"/>
</dbReference>
<dbReference type="SUPFAM" id="SSF52972">
    <property type="entry name" value="ITPase-like"/>
    <property type="match status" value="1"/>
</dbReference>
<evidence type="ECO:0000255" key="1">
    <source>
        <dbReference type="HAMAP-Rule" id="MF_00528"/>
    </source>
</evidence>
<protein>
    <recommendedName>
        <fullName evidence="1">dTTP/UTP pyrophosphatase</fullName>
        <shortName evidence="1">dTTPase/UTPase</shortName>
        <ecNumber evidence="1">3.6.1.9</ecNumber>
    </recommendedName>
    <alternativeName>
        <fullName evidence="1">Nucleoside triphosphate pyrophosphatase</fullName>
    </alternativeName>
    <alternativeName>
        <fullName evidence="1">Nucleotide pyrophosphatase</fullName>
        <shortName evidence="1">Nucleotide PPase</shortName>
    </alternativeName>
</protein>
<name>NTPPA_CHLT2</name>
<accession>B0B7R8</accession>
<organism>
    <name type="scientific">Chlamydia trachomatis serovar L2 (strain ATCC VR-902B / DSM 19102 / 434/Bu)</name>
    <dbReference type="NCBI Taxonomy" id="471472"/>
    <lineage>
        <taxon>Bacteria</taxon>
        <taxon>Pseudomonadati</taxon>
        <taxon>Chlamydiota</taxon>
        <taxon>Chlamydiia</taxon>
        <taxon>Chlamydiales</taxon>
        <taxon>Chlamydiaceae</taxon>
        <taxon>Chlamydia/Chlamydophila group</taxon>
        <taxon>Chlamydia</taxon>
    </lineage>
</organism>
<reference key="1">
    <citation type="journal article" date="2008" name="Genome Res.">
        <title>Chlamydia trachomatis: genome sequence analysis of lymphogranuloma venereum isolates.</title>
        <authorList>
            <person name="Thomson N.R."/>
            <person name="Holden M.T.G."/>
            <person name="Carder C."/>
            <person name="Lennard N."/>
            <person name="Lockey S.J."/>
            <person name="Marsh P."/>
            <person name="Skipp P."/>
            <person name="O'Connor C.D."/>
            <person name="Goodhead I."/>
            <person name="Norbertzcak H."/>
            <person name="Harris B."/>
            <person name="Ormond D."/>
            <person name="Rance R."/>
            <person name="Quail M.A."/>
            <person name="Parkhill J."/>
            <person name="Stephens R.S."/>
            <person name="Clarke I.N."/>
        </authorList>
    </citation>
    <scope>NUCLEOTIDE SEQUENCE [LARGE SCALE GENOMIC DNA]</scope>
    <source>
        <strain>ATCC VR-902B / DSM 19102 / 434/Bu</strain>
    </source>
</reference>
<comment type="function">
    <text evidence="1">Nucleoside triphosphate pyrophosphatase that hydrolyzes dTTP and UTP. May have a dual role in cell division arrest and in preventing the incorporation of modified nucleotides into cellular nucleic acids.</text>
</comment>
<comment type="catalytic activity">
    <reaction evidence="1">
        <text>dTTP + H2O = dTMP + diphosphate + H(+)</text>
        <dbReference type="Rhea" id="RHEA:28534"/>
        <dbReference type="ChEBI" id="CHEBI:15377"/>
        <dbReference type="ChEBI" id="CHEBI:15378"/>
        <dbReference type="ChEBI" id="CHEBI:33019"/>
        <dbReference type="ChEBI" id="CHEBI:37568"/>
        <dbReference type="ChEBI" id="CHEBI:63528"/>
        <dbReference type="EC" id="3.6.1.9"/>
    </reaction>
</comment>
<comment type="catalytic activity">
    <reaction evidence="1">
        <text>UTP + H2O = UMP + diphosphate + H(+)</text>
        <dbReference type="Rhea" id="RHEA:29395"/>
        <dbReference type="ChEBI" id="CHEBI:15377"/>
        <dbReference type="ChEBI" id="CHEBI:15378"/>
        <dbReference type="ChEBI" id="CHEBI:33019"/>
        <dbReference type="ChEBI" id="CHEBI:46398"/>
        <dbReference type="ChEBI" id="CHEBI:57865"/>
        <dbReference type="EC" id="3.6.1.9"/>
    </reaction>
</comment>
<comment type="cofactor">
    <cofactor evidence="1">
        <name>a divalent metal cation</name>
        <dbReference type="ChEBI" id="CHEBI:60240"/>
    </cofactor>
</comment>
<comment type="subcellular location">
    <subcellularLocation>
        <location evidence="1">Cytoplasm</location>
    </subcellularLocation>
</comment>
<comment type="similarity">
    <text evidence="1">Belongs to the Maf family. YhdE subfamily.</text>
</comment>